<gene>
    <name type="primary">FRG2C</name>
</gene>
<dbReference type="EMBL" id="AC108724">
    <property type="status" value="NOT_ANNOTATED_CDS"/>
    <property type="molecule type" value="Genomic_DNA"/>
</dbReference>
<dbReference type="CCDS" id="CCDS43108.1"/>
<dbReference type="RefSeq" id="NP_001118231.1">
    <property type="nucleotide sequence ID" value="NM_001124759.5"/>
</dbReference>
<dbReference type="RefSeq" id="XP_011531556.1">
    <property type="nucleotide sequence ID" value="XM_011533254.2"/>
</dbReference>
<dbReference type="RefSeq" id="XP_054200795.1">
    <property type="nucleotide sequence ID" value="XM_054344820.1"/>
</dbReference>
<dbReference type="STRING" id="9606.ENSP00000312299"/>
<dbReference type="iPTMnet" id="A6NGY1"/>
<dbReference type="PhosphoSitePlus" id="A6NGY1"/>
<dbReference type="BioMuta" id="FRG2C"/>
<dbReference type="MassIVE" id="A6NGY1"/>
<dbReference type="PaxDb" id="9606-ENSP00000312299"/>
<dbReference type="PeptideAtlas" id="A6NGY1"/>
<dbReference type="ProteomicsDB" id="1163"/>
<dbReference type="Antibodypedia" id="82447">
    <property type="antibodies" value="1 antibodies from 1 providers"/>
</dbReference>
<dbReference type="DNASU" id="100288801"/>
<dbReference type="Ensembl" id="ENST00000308062.8">
    <property type="protein sequence ID" value="ENSP00000312299.3"/>
    <property type="gene ID" value="ENSG00000172969.8"/>
</dbReference>
<dbReference type="GeneID" id="100288801"/>
<dbReference type="KEGG" id="hsa:100288801"/>
<dbReference type="MANE-Select" id="ENST00000308062.8">
    <property type="protein sequence ID" value="ENSP00000312299.3"/>
    <property type="RefSeq nucleotide sequence ID" value="NM_001124759.5"/>
    <property type="RefSeq protein sequence ID" value="NP_001118231.1"/>
</dbReference>
<dbReference type="UCSC" id="uc003dpt.6">
    <property type="organism name" value="human"/>
</dbReference>
<dbReference type="AGR" id="HGNC:33626"/>
<dbReference type="CTD" id="100288801"/>
<dbReference type="GeneCards" id="FRG2C"/>
<dbReference type="HGNC" id="HGNC:33626">
    <property type="gene designation" value="FRG2C"/>
</dbReference>
<dbReference type="HPA" id="ENSG00000172969">
    <property type="expression patterns" value="Not detected"/>
</dbReference>
<dbReference type="neXtProt" id="NX_A6NGY1"/>
<dbReference type="OpenTargets" id="ENSG00000172969"/>
<dbReference type="PharmGKB" id="PA162388921"/>
<dbReference type="VEuPathDB" id="HostDB:ENSG00000172969"/>
<dbReference type="eggNOG" id="ENOG502SNAQ">
    <property type="taxonomic scope" value="Eukaryota"/>
</dbReference>
<dbReference type="GeneTree" id="ENSGT00530000064266"/>
<dbReference type="InParanoid" id="A6NGY1"/>
<dbReference type="OMA" id="MQHPTDQ"/>
<dbReference type="OrthoDB" id="9751302at2759"/>
<dbReference type="PAN-GO" id="A6NGY1">
    <property type="GO annotations" value="0 GO annotations based on evolutionary models"/>
</dbReference>
<dbReference type="PhylomeDB" id="A6NGY1"/>
<dbReference type="TreeFam" id="TF342559"/>
<dbReference type="PathwayCommons" id="A6NGY1"/>
<dbReference type="SignaLink" id="A6NGY1"/>
<dbReference type="BioGRID-ORCS" id="100288801">
    <property type="hits" value="102 hits in 1066 CRISPR screens"/>
</dbReference>
<dbReference type="GenomeRNAi" id="100288801"/>
<dbReference type="Pharos" id="A6NGY1">
    <property type="development level" value="Tdark"/>
</dbReference>
<dbReference type="PRO" id="PR:A6NGY1"/>
<dbReference type="Proteomes" id="UP000005640">
    <property type="component" value="Chromosome 3"/>
</dbReference>
<dbReference type="RNAct" id="A6NGY1">
    <property type="molecule type" value="protein"/>
</dbReference>
<dbReference type="Bgee" id="ENSG00000172969">
    <property type="expression patterns" value="Expressed in primordial germ cell in gonad and 9 other cell types or tissues"/>
</dbReference>
<dbReference type="ExpressionAtlas" id="A6NGY1">
    <property type="expression patterns" value="baseline and differential"/>
</dbReference>
<dbReference type="GO" id="GO:0005634">
    <property type="term" value="C:nucleus"/>
    <property type="evidence" value="ECO:0007669"/>
    <property type="project" value="UniProtKB-SubCell"/>
</dbReference>
<dbReference type="InterPro" id="IPR026245">
    <property type="entry name" value="FRG2"/>
</dbReference>
<dbReference type="PANTHER" id="PTHR31883:SF1">
    <property type="entry name" value="PROTEIN FRG2-LIKE-2"/>
    <property type="match status" value="1"/>
</dbReference>
<dbReference type="PANTHER" id="PTHR31883">
    <property type="entry name" value="PROTEIN FRG2-RELATED"/>
    <property type="match status" value="1"/>
</dbReference>
<dbReference type="Pfam" id="PF15315">
    <property type="entry name" value="FRG2"/>
    <property type="match status" value="1"/>
</dbReference>
<dbReference type="PRINTS" id="PR02074">
    <property type="entry name" value="PROTEINFRG2"/>
</dbReference>
<reference key="1">
    <citation type="journal article" date="2006" name="Nature">
        <title>The DNA sequence, annotation and analysis of human chromosome 3.</title>
        <authorList>
            <person name="Muzny D.M."/>
            <person name="Scherer S.E."/>
            <person name="Kaul R."/>
            <person name="Wang J."/>
            <person name="Yu J."/>
            <person name="Sudbrak R."/>
            <person name="Buhay C.J."/>
            <person name="Chen R."/>
            <person name="Cree A."/>
            <person name="Ding Y."/>
            <person name="Dugan-Rocha S."/>
            <person name="Gill R."/>
            <person name="Gunaratne P."/>
            <person name="Harris R.A."/>
            <person name="Hawes A.C."/>
            <person name="Hernandez J."/>
            <person name="Hodgson A.V."/>
            <person name="Hume J."/>
            <person name="Jackson A."/>
            <person name="Khan Z.M."/>
            <person name="Kovar-Smith C."/>
            <person name="Lewis L.R."/>
            <person name="Lozado R.J."/>
            <person name="Metzker M.L."/>
            <person name="Milosavljevic A."/>
            <person name="Miner G.R."/>
            <person name="Morgan M.B."/>
            <person name="Nazareth L.V."/>
            <person name="Scott G."/>
            <person name="Sodergren E."/>
            <person name="Song X.-Z."/>
            <person name="Steffen D."/>
            <person name="Wei S."/>
            <person name="Wheeler D.A."/>
            <person name="Wright M.W."/>
            <person name="Worley K.C."/>
            <person name="Yuan Y."/>
            <person name="Zhang Z."/>
            <person name="Adams C.Q."/>
            <person name="Ansari-Lari M.A."/>
            <person name="Ayele M."/>
            <person name="Brown M.J."/>
            <person name="Chen G."/>
            <person name="Chen Z."/>
            <person name="Clendenning J."/>
            <person name="Clerc-Blankenburg K.P."/>
            <person name="Chen R."/>
            <person name="Chen Z."/>
            <person name="Davis C."/>
            <person name="Delgado O."/>
            <person name="Dinh H.H."/>
            <person name="Dong W."/>
            <person name="Draper H."/>
            <person name="Ernst S."/>
            <person name="Fu G."/>
            <person name="Gonzalez-Garay M.L."/>
            <person name="Garcia D.K."/>
            <person name="Gillett W."/>
            <person name="Gu J."/>
            <person name="Hao B."/>
            <person name="Haugen E."/>
            <person name="Havlak P."/>
            <person name="He X."/>
            <person name="Hennig S."/>
            <person name="Hu S."/>
            <person name="Huang W."/>
            <person name="Jackson L.R."/>
            <person name="Jacob L.S."/>
            <person name="Kelly S.H."/>
            <person name="Kube M."/>
            <person name="Levy R."/>
            <person name="Li Z."/>
            <person name="Liu B."/>
            <person name="Liu J."/>
            <person name="Liu W."/>
            <person name="Lu J."/>
            <person name="Maheshwari M."/>
            <person name="Nguyen B.-V."/>
            <person name="Okwuonu G.O."/>
            <person name="Palmeiri A."/>
            <person name="Pasternak S."/>
            <person name="Perez L.M."/>
            <person name="Phelps K.A."/>
            <person name="Plopper F.J."/>
            <person name="Qiang B."/>
            <person name="Raymond C."/>
            <person name="Rodriguez R."/>
            <person name="Saenphimmachak C."/>
            <person name="Santibanez J."/>
            <person name="Shen H."/>
            <person name="Shen Y."/>
            <person name="Subramanian S."/>
            <person name="Tabor P.E."/>
            <person name="Verduzco D."/>
            <person name="Waldron L."/>
            <person name="Wang J."/>
            <person name="Wang J."/>
            <person name="Wang Q."/>
            <person name="Williams G.A."/>
            <person name="Wong G.K.-S."/>
            <person name="Yao Z."/>
            <person name="Zhang J."/>
            <person name="Zhang X."/>
            <person name="Zhao G."/>
            <person name="Zhou J."/>
            <person name="Zhou Y."/>
            <person name="Nelson D."/>
            <person name="Lehrach H."/>
            <person name="Reinhardt R."/>
            <person name="Naylor S.L."/>
            <person name="Yang H."/>
            <person name="Olson M."/>
            <person name="Weinstock G."/>
            <person name="Gibbs R.A."/>
        </authorList>
    </citation>
    <scope>NUCLEOTIDE SEQUENCE [LARGE SCALE GENOMIC DNA]</scope>
</reference>
<reference key="2">
    <citation type="journal article" date="2004" name="J. Med. Genet.">
        <title>FRG2, an FSHD candidate gene, is transcriptionally upregulated in differentiating primary myoblast cultures of FSHD patients.</title>
        <authorList>
            <person name="Rijkers T."/>
            <person name="Deidda G."/>
            <person name="van Koningsbruggen S."/>
            <person name="van Geel M."/>
            <person name="Lemmers R.J.L.F."/>
            <person name="van Deutekom J.C.T."/>
            <person name="Figlewicz D."/>
            <person name="Hewitt J.E."/>
            <person name="Padberg G.W."/>
            <person name="Frants R.R."/>
            <person name="van der Maarel S.M."/>
        </authorList>
    </citation>
    <scope>IDENTIFICATION</scope>
</reference>
<protein>
    <recommendedName>
        <fullName>Protein FRG2-like-2</fullName>
    </recommendedName>
    <alternativeName>
        <fullName>FSHD region gene 2 protein family member C</fullName>
    </alternativeName>
    <alternativeName>
        <fullName>HSA3-FRG2</fullName>
    </alternativeName>
</protein>
<feature type="chain" id="PRO_0000300692" description="Protein FRG2-like-2">
    <location>
        <begin position="1"/>
        <end position="282"/>
    </location>
</feature>
<feature type="region of interest" description="Disordered" evidence="2">
    <location>
        <begin position="1"/>
        <end position="96"/>
    </location>
</feature>
<feature type="region of interest" description="Disordered" evidence="2">
    <location>
        <begin position="249"/>
        <end position="282"/>
    </location>
</feature>
<feature type="compositionally biased region" description="Basic and acidic residues" evidence="2">
    <location>
        <begin position="1"/>
        <end position="10"/>
    </location>
</feature>
<feature type="compositionally biased region" description="Polar residues" evidence="2">
    <location>
        <begin position="13"/>
        <end position="31"/>
    </location>
</feature>
<feature type="compositionally biased region" description="Polar residues" evidence="2">
    <location>
        <begin position="58"/>
        <end position="68"/>
    </location>
</feature>
<feature type="compositionally biased region" description="Polar residues" evidence="2">
    <location>
        <begin position="79"/>
        <end position="94"/>
    </location>
</feature>
<feature type="sequence variant" id="VAR_060156" description="In dbSNP:rs13073018.">
    <original>C</original>
    <variation>R</variation>
    <location>
        <position position="12"/>
    </location>
</feature>
<feature type="sequence variant" id="VAR_060157" description="In dbSNP:rs13096122.">
    <original>L</original>
    <variation>M</variation>
    <location>
        <position position="210"/>
    </location>
</feature>
<accession>A6NGY1</accession>
<comment type="subcellular location">
    <subcellularLocation>
        <location evidence="1">Nucleus</location>
    </subcellularLocation>
</comment>
<comment type="similarity">
    <text evidence="3">Belongs to the FRG2 family.</text>
</comment>
<evidence type="ECO:0000250" key="1"/>
<evidence type="ECO:0000256" key="2">
    <source>
        <dbReference type="SAM" id="MobiDB-lite"/>
    </source>
</evidence>
<evidence type="ECO:0000305" key="3"/>
<organism>
    <name type="scientific">Homo sapiens</name>
    <name type="common">Human</name>
    <dbReference type="NCBI Taxonomy" id="9606"/>
    <lineage>
        <taxon>Eukaryota</taxon>
        <taxon>Metazoa</taxon>
        <taxon>Chordata</taxon>
        <taxon>Craniata</taxon>
        <taxon>Vertebrata</taxon>
        <taxon>Euteleostomi</taxon>
        <taxon>Mammalia</taxon>
        <taxon>Eutheria</taxon>
        <taxon>Euarchontoglires</taxon>
        <taxon>Primates</taxon>
        <taxon>Haplorrhini</taxon>
        <taxon>Catarrhini</taxon>
        <taxon>Hominidae</taxon>
        <taxon>Homo</taxon>
    </lineage>
</organism>
<name>FRG2C_HUMAN</name>
<sequence>MGKGNEDPDLHCSSIQCSTDQPPFQQISFTEKGSDEKKPFKGKGKTAFSHSSEKHTQRQAGSDPNPNKENSEETKLKAGNSTAGSEPESSSYQENCRKRKISSKDICQDRAGNCPEEECNLTLNKKSRSSTAVHNSEIQETCDAHHRGSSRACTGRSKRHRSRALEVQTPSLRKSLVTSVRAMSEAVYQDLAQVWAQQIHSPLTCEQLTLLTRLRGPLCAQVQTLYSMATQAAYVFPAESWLVPATLPGPGDSALDREAHPFPGQEITEPVSGSDEAKLGAP</sequence>
<proteinExistence type="inferred from homology"/>
<keyword id="KW-0539">Nucleus</keyword>
<keyword id="KW-1185">Reference proteome</keyword>